<reference key="1">
    <citation type="journal article" date="2006" name="BMC Genomics">
        <title>Comparative genome analysis: selection pressure on the Borrelia vls cassettes is essential for infectivity.</title>
        <authorList>
            <person name="Gloeckner G."/>
            <person name="Schulte-Spechtel U."/>
            <person name="Schilhabel M."/>
            <person name="Felder M."/>
            <person name="Suehnel J."/>
            <person name="Wilske B."/>
            <person name="Platzer M."/>
        </authorList>
    </citation>
    <scope>NUCLEOTIDE SEQUENCE [LARGE SCALE GENOMIC DNA]</scope>
    <source>
        <strain>PKo</strain>
    </source>
</reference>
<reference key="2">
    <citation type="journal article" date="2011" name="J. Bacteriol.">
        <title>Whole-genome sequences of two Borrelia afzelii and two Borrelia garinii Lyme disease agent isolates.</title>
        <authorList>
            <person name="Casjens S.R."/>
            <person name="Mongodin E.F."/>
            <person name="Qiu W.G."/>
            <person name="Dunn J.J."/>
            <person name="Luft B.J."/>
            <person name="Fraser-Liggett C.M."/>
            <person name="Schutzer S.E."/>
        </authorList>
    </citation>
    <scope>NUCLEOTIDE SEQUENCE [LARGE SCALE GENOMIC DNA]</scope>
    <source>
        <strain>PKo</strain>
    </source>
</reference>
<organism>
    <name type="scientific">Borreliella afzelii (strain PKo)</name>
    <name type="common">Borrelia afzelii</name>
    <dbReference type="NCBI Taxonomy" id="390236"/>
    <lineage>
        <taxon>Bacteria</taxon>
        <taxon>Pseudomonadati</taxon>
        <taxon>Spirochaetota</taxon>
        <taxon>Spirochaetia</taxon>
        <taxon>Spirochaetales</taxon>
        <taxon>Borreliaceae</taxon>
        <taxon>Borreliella</taxon>
    </lineage>
</organism>
<name>RS2_BORAP</name>
<gene>
    <name evidence="1" type="primary">rpsB</name>
    <name type="ordered locus">BAPKO_0124</name>
    <name type="ordered locus">BafPKo_0121</name>
</gene>
<proteinExistence type="inferred from homology"/>
<accession>Q0SP41</accession>
<accession>G0IQW8</accession>
<evidence type="ECO:0000255" key="1">
    <source>
        <dbReference type="HAMAP-Rule" id="MF_00291"/>
    </source>
</evidence>
<evidence type="ECO:0000305" key="2"/>
<sequence>MAIITMKSLLEAGVHFGHQVKRLDPRMKRFIFSERNEIHILDLQKTLQGIKDSYELVQRVIKDGKKVLFIGTKKQASEIIEQEARRSDMPYVNNRWLGGMLSNFNTIRKSVQKLKKLEKMEVDGTFDMISKKEISQLNREKLKLAKNLSGIKDMETLPGAVFIIDPKREQIAINEARKLKIPIISVVDTNCNPDVIDCPIPGNDDAIRSVALFTKIISDAILESDKEVGIQIIENLNEEDLMKEIEIKNDKSDSIEEGGNNL</sequence>
<dbReference type="EMBL" id="CP000395">
    <property type="protein sequence ID" value="ABH01387.1"/>
    <property type="status" value="ALT_INIT"/>
    <property type="molecule type" value="Genomic_DNA"/>
</dbReference>
<dbReference type="EMBL" id="CP002933">
    <property type="protein sequence ID" value="AEL69354.1"/>
    <property type="molecule type" value="Genomic_DNA"/>
</dbReference>
<dbReference type="RefSeq" id="WP_044052041.1">
    <property type="nucleotide sequence ID" value="NC_008277.1"/>
</dbReference>
<dbReference type="SMR" id="Q0SP41"/>
<dbReference type="STRING" id="29518.BLA32_03675"/>
<dbReference type="GeneID" id="77264965"/>
<dbReference type="KEGG" id="baf:BAPKO_0124"/>
<dbReference type="KEGG" id="bafz:BafPKo_0121"/>
<dbReference type="PATRIC" id="fig|390236.22.peg.120"/>
<dbReference type="eggNOG" id="COG0052">
    <property type="taxonomic scope" value="Bacteria"/>
</dbReference>
<dbReference type="HOGENOM" id="CLU_040318_1_3_12"/>
<dbReference type="OrthoDB" id="9808036at2"/>
<dbReference type="Proteomes" id="UP000005216">
    <property type="component" value="Chromosome"/>
</dbReference>
<dbReference type="GO" id="GO:0022627">
    <property type="term" value="C:cytosolic small ribosomal subunit"/>
    <property type="evidence" value="ECO:0007669"/>
    <property type="project" value="TreeGrafter"/>
</dbReference>
<dbReference type="GO" id="GO:0003735">
    <property type="term" value="F:structural constituent of ribosome"/>
    <property type="evidence" value="ECO:0007669"/>
    <property type="project" value="InterPro"/>
</dbReference>
<dbReference type="GO" id="GO:0006412">
    <property type="term" value="P:translation"/>
    <property type="evidence" value="ECO:0007669"/>
    <property type="project" value="UniProtKB-UniRule"/>
</dbReference>
<dbReference type="CDD" id="cd01425">
    <property type="entry name" value="RPS2"/>
    <property type="match status" value="1"/>
</dbReference>
<dbReference type="FunFam" id="1.10.287.610:FF:000001">
    <property type="entry name" value="30S ribosomal protein S2"/>
    <property type="match status" value="1"/>
</dbReference>
<dbReference type="Gene3D" id="3.40.50.10490">
    <property type="entry name" value="Glucose-6-phosphate isomerase like protein, domain 1"/>
    <property type="match status" value="1"/>
</dbReference>
<dbReference type="Gene3D" id="1.10.287.610">
    <property type="entry name" value="Helix hairpin bin"/>
    <property type="match status" value="1"/>
</dbReference>
<dbReference type="HAMAP" id="MF_00291_B">
    <property type="entry name" value="Ribosomal_uS2_B"/>
    <property type="match status" value="1"/>
</dbReference>
<dbReference type="InterPro" id="IPR001865">
    <property type="entry name" value="Ribosomal_uS2"/>
</dbReference>
<dbReference type="InterPro" id="IPR005706">
    <property type="entry name" value="Ribosomal_uS2_bac/mit/plastid"/>
</dbReference>
<dbReference type="InterPro" id="IPR018130">
    <property type="entry name" value="Ribosomal_uS2_CS"/>
</dbReference>
<dbReference type="InterPro" id="IPR023591">
    <property type="entry name" value="Ribosomal_uS2_flav_dom_sf"/>
</dbReference>
<dbReference type="NCBIfam" id="TIGR01011">
    <property type="entry name" value="rpsB_bact"/>
    <property type="match status" value="1"/>
</dbReference>
<dbReference type="PANTHER" id="PTHR12534">
    <property type="entry name" value="30S RIBOSOMAL PROTEIN S2 PROKARYOTIC AND ORGANELLAR"/>
    <property type="match status" value="1"/>
</dbReference>
<dbReference type="PANTHER" id="PTHR12534:SF0">
    <property type="entry name" value="SMALL RIBOSOMAL SUBUNIT PROTEIN US2M"/>
    <property type="match status" value="1"/>
</dbReference>
<dbReference type="Pfam" id="PF00318">
    <property type="entry name" value="Ribosomal_S2"/>
    <property type="match status" value="1"/>
</dbReference>
<dbReference type="PRINTS" id="PR00395">
    <property type="entry name" value="RIBOSOMALS2"/>
</dbReference>
<dbReference type="SUPFAM" id="SSF52313">
    <property type="entry name" value="Ribosomal protein S2"/>
    <property type="match status" value="1"/>
</dbReference>
<dbReference type="PROSITE" id="PS00962">
    <property type="entry name" value="RIBOSOMAL_S2_1"/>
    <property type="match status" value="1"/>
</dbReference>
<dbReference type="PROSITE" id="PS00963">
    <property type="entry name" value="RIBOSOMAL_S2_2"/>
    <property type="match status" value="1"/>
</dbReference>
<protein>
    <recommendedName>
        <fullName evidence="1">Small ribosomal subunit protein uS2</fullName>
    </recommendedName>
    <alternativeName>
        <fullName evidence="2">30S ribosomal protein S2</fullName>
    </alternativeName>
</protein>
<keyword id="KW-0687">Ribonucleoprotein</keyword>
<keyword id="KW-0689">Ribosomal protein</keyword>
<feature type="chain" id="PRO_0000351981" description="Small ribosomal subunit protein uS2">
    <location>
        <begin position="1"/>
        <end position="262"/>
    </location>
</feature>
<feature type="sequence conflict" description="In Ref. 2; AEL69354." evidence="2" ref="2">
    <original>NNL</original>
    <variation>E</variation>
    <location>
        <begin position="260"/>
        <end position="262"/>
    </location>
</feature>
<comment type="similarity">
    <text evidence="1">Belongs to the universal ribosomal protein uS2 family.</text>
</comment>
<comment type="sequence caution" evidence="2">
    <conflict type="erroneous initiation">
        <sequence resource="EMBL-CDS" id="ABH01387"/>
    </conflict>
    <text>Truncated N-terminus.</text>
</comment>